<organism>
    <name type="scientific">Saccharomyces cerevisiae (strain ATCC 204508 / S288c)</name>
    <name type="common">Baker's yeast</name>
    <dbReference type="NCBI Taxonomy" id="559292"/>
    <lineage>
        <taxon>Eukaryota</taxon>
        <taxon>Fungi</taxon>
        <taxon>Dikarya</taxon>
        <taxon>Ascomycota</taxon>
        <taxon>Saccharomycotina</taxon>
        <taxon>Saccharomycetes</taxon>
        <taxon>Saccharomycetales</taxon>
        <taxon>Saccharomycetaceae</taxon>
        <taxon>Saccharomyces</taxon>
    </lineage>
</organism>
<comment type="function">
    <text evidence="8 9 16 22 24 25 26 27 28 29 30 31 35 36">Serine/threonine protein kinase essential for release from glucose repression (PubMed:1944227, PubMed:25869125, PubMed:3049551, PubMed:3526554, PubMed:6366512, PubMed:8289797, PubMed:8628258). Catalytic subunit of the AMP-activated protein kinase complex also known as the SNF1 kinase complex (Snf1c), a central regulator of cellular energy homeostasis, which, in response to a fall in intracellular ATP levels, activates energy-producing pathways and inhibits energy-consuming processes (PubMed:26667037, PubMed:8289797). The complex phosphorylates histone H3 to form H3S10ph, which promotes H3K14ac formation, leading to transcriptional activation through TBP recruitment to the promoters (PubMed:15719021). The complex also negatively regulates the HOG1 MAPK pathway in ER stress response including unfolded protein response (UPR) (PubMed:25730376, PubMed:26394309). Under nutrient/energy depletion, the complex phosphorylates and activates PAS kinase PSK1 which in turn activates PBS1, leading to the inhibition of the TORC1 signaling pathway (PubMed:25428989). SNF1 also interacts and phosphorylates adenylate cyclase CYR1 and negatively regulates the protein kinase A signaling pathway (PubMed:26309257). Also phosphorylates and regulates the transcriptional activator CAT8 (PubMed:15121831).</text>
</comment>
<comment type="catalytic activity">
    <reaction evidence="9 23 30">
        <text>L-seryl-[protein] + ATP = O-phospho-L-seryl-[protein] + ADP + H(+)</text>
        <dbReference type="Rhea" id="RHEA:17989"/>
        <dbReference type="Rhea" id="RHEA-COMP:9863"/>
        <dbReference type="Rhea" id="RHEA-COMP:11604"/>
        <dbReference type="ChEBI" id="CHEBI:15378"/>
        <dbReference type="ChEBI" id="CHEBI:29999"/>
        <dbReference type="ChEBI" id="CHEBI:30616"/>
        <dbReference type="ChEBI" id="CHEBI:83421"/>
        <dbReference type="ChEBI" id="CHEBI:456216"/>
        <dbReference type="EC" id="2.7.11.1"/>
    </reaction>
</comment>
<comment type="catalytic activity">
    <reaction evidence="9 23 30">
        <text>L-threonyl-[protein] + ATP = O-phospho-L-threonyl-[protein] + ADP + H(+)</text>
        <dbReference type="Rhea" id="RHEA:46608"/>
        <dbReference type="Rhea" id="RHEA-COMP:11060"/>
        <dbReference type="Rhea" id="RHEA-COMP:11605"/>
        <dbReference type="ChEBI" id="CHEBI:15378"/>
        <dbReference type="ChEBI" id="CHEBI:30013"/>
        <dbReference type="ChEBI" id="CHEBI:30616"/>
        <dbReference type="ChEBI" id="CHEBI:61977"/>
        <dbReference type="ChEBI" id="CHEBI:456216"/>
        <dbReference type="EC" id="2.7.11.1"/>
    </reaction>
</comment>
<comment type="activity regulation">
    <text evidence="15 23">The kinase activity is positively regulated by SNF4 via sequestration of the SNF1 auto-inhibitory domain (AID) (PubMed:17851534, PubMed:2557546).</text>
</comment>
<comment type="subunit">
    <text evidence="5 9 10 13 15 21 23 26 33 36 37">Component of the AMP-activated protein kinase complex also known as the SNF1 kinase complex (Snf1c), a heterotrimeric complex composed of an alpha subunit (SNF1), a regulatory subunit beta (GAL83 and substoichiometric alternate beta subunits SIP1 and SIP2), and a regulatory subunit gamma (SNF4) (PubMed:15719021, PubMed:17851534, PubMed:2481228, PubMed:2557546, PubMed:7813428, PubMed:9121458). Interacts with the transcriptional activator SIP4 (PubMed:8628258). Interacts with SAK1 (PubMed:12748292, PubMed:16847059). Interacts with CTK1 (PubMed:16182287): Interacts with adenylate cyclase CYR1 (PubMed:26309257).</text>
</comment>
<comment type="interaction">
    <interactant intactId="EBI-17516">
        <id>P06782</id>
    </interactant>
    <interactant intactId="EBI-4192">
        <id>Q00684</id>
        <label>CDC14</label>
    </interactant>
    <organismsDiffer>false</organismsDiffer>
    <experiments>2</experiments>
</comment>
<comment type="interaction">
    <interactant intactId="EBI-17516">
        <id>P06782</id>
    </interactant>
    <interactant intactId="EBI-7244">
        <id>Q04739</id>
        <label>GAL83</label>
    </interactant>
    <organismsDiffer>false</organismsDiffer>
    <experiments>6</experiments>
</comment>
<comment type="interaction">
    <interactant intactId="EBI-17516">
        <id>P06782</id>
    </interactant>
    <interactant intactId="EBI-12207">
        <id>P22211</id>
        <label>NPR1</label>
    </interactant>
    <organismsDiffer>false</organismsDiffer>
    <experiments>3</experiments>
</comment>
<comment type="interaction">
    <interactant intactId="EBI-17516">
        <id>P06782</id>
    </interactant>
    <interactant intactId="EBI-8270">
        <id>Q00816</id>
        <label>REG1</label>
    </interactant>
    <organismsDiffer>false</organismsDiffer>
    <experiments>8</experiments>
</comment>
<comment type="interaction">
    <interactant intactId="EBI-17516">
        <id>P06782</id>
    </interactant>
    <interactant intactId="EBI-14921">
        <id>P38232</id>
        <label>REG2</label>
    </interactant>
    <organismsDiffer>false</organismsDiffer>
    <experiments>3</experiments>
</comment>
<comment type="interaction">
    <interactant intactId="EBI-17516">
        <id>P06782</id>
    </interactant>
    <interactant intactId="EBI-17187">
        <id>P34164</id>
        <label>SIP2</label>
    </interactant>
    <organismsDiffer>false</organismsDiffer>
    <experiments>12</experiments>
</comment>
<comment type="interaction">
    <interactant intactId="EBI-17516">
        <id>P06782</id>
    </interactant>
    <interactant intactId="EBI-17516">
        <id>P06782</id>
        <label>SNF1</label>
    </interactant>
    <organismsDiffer>false</organismsDiffer>
    <experiments>6</experiments>
</comment>
<comment type="interaction">
    <interactant intactId="EBI-17516">
        <id>P06782</id>
    </interactant>
    <interactant intactId="EBI-17537">
        <id>P12904</id>
        <label>SNF4</label>
    </interactant>
    <organismsDiffer>false</organismsDiffer>
    <experiments>23</experiments>
</comment>
<comment type="subcellular location">
    <subcellularLocation>
        <location evidence="25">Cytoplasm</location>
    </subcellularLocation>
    <subcellularLocation>
        <location evidence="25">Nucleus</location>
    </subcellularLocation>
    <subcellularLocation>
        <location evidence="14">Nucleus membrane</location>
        <topology evidence="14">Peripheral membrane protein</topology>
    </subcellularLocation>
    <text evidence="25">Nuclear translocation occurs under nitrogen and glucose starvation conditions (PubMed:25869125).</text>
</comment>
<comment type="induction">
    <text evidence="32">Expression of the SNF1 gene itself is not glucose repressible (PubMed:6366513).</text>
</comment>
<comment type="domain">
    <text evidence="15 17 18">The regulatory domain (RS) also called auto-inhibitory domain (AID) inhibits kinase activity of the protein kinase domain (KD) (PubMed:19474788, PubMed:20823513). The AID is sequestered by SNF4 within the AMP-activated protein kinase complex which might correspond to the activated SNF1 form (PubMed:17851534).</text>
</comment>
<comment type="domain">
    <text evidence="25">The ubiquitin-associated domain (UBA) localized within the AID dampens kinase activation, probably by restraining SNF1-SNF4 associations (PubMed:25869125). Moreover, the UBA domain influences life span in a FKH1- and FKH2-dependent mechanism (PubMed:25869125).</text>
</comment>
<comment type="PTM">
    <text evidence="5 19">Phosphorylation at Thr-210 in response to glucose limitation leads to activation of kinase activity (PubMed:11486005, PubMed:12748292). ADP, but not AMP, protects the enzyme from dephosphorylation at Thr-210 by GLC7 (PubMed:22019086).</text>
</comment>
<comment type="PTM">
    <text evidence="20">Sumoylation by the SUMO (E3) ligase MMS21 leads to inhibition by interaction of SUMO attached to Lys-549 with a SUMO-interacting sequence motif located near the active site of SNF1, and by targeting SNF1 for glucose-induced destruction via the SLX5-SLX8 (SUMO-directed) ubiquitin ligase (PubMed:24108357).</text>
</comment>
<comment type="miscellaneous">
    <text evidence="6">Present with 589 molecules/cell in log phase SD medium.</text>
</comment>
<comment type="similarity">
    <text evidence="41">Belongs to the protein kinase superfamily. CAMK Ser/Thr protein kinase family. SNF1 subfamily.</text>
</comment>
<name>SNF1_YEAST</name>
<feature type="chain" id="PRO_0000086670" description="Carbon catabolite-derepressing protein kinase">
    <location>
        <begin position="1"/>
        <end position="633"/>
    </location>
</feature>
<feature type="domain" description="Protein kinase" evidence="1 11 12">
    <location>
        <begin position="55"/>
        <end position="306"/>
    </location>
</feature>
<feature type="domain" description="UBA" evidence="25">
    <location>
        <begin position="348"/>
        <end position="389"/>
    </location>
</feature>
<feature type="region of interest" description="Disordered" evidence="3">
    <location>
        <begin position="1"/>
        <end position="46"/>
    </location>
</feature>
<feature type="region of interest" description="Auto-inhibitory domain (AID)" evidence="15 17">
    <location>
        <begin position="313"/>
        <end position="392"/>
    </location>
</feature>
<feature type="region of interest" description="Disordered" evidence="3">
    <location>
        <begin position="317"/>
        <end position="345"/>
    </location>
</feature>
<feature type="region of interest" description="Disordered" evidence="3">
    <location>
        <begin position="409"/>
        <end position="434"/>
    </location>
</feature>
<feature type="compositionally biased region" description="Low complexity" evidence="3">
    <location>
        <begin position="1"/>
        <end position="16"/>
    </location>
</feature>
<feature type="compositionally biased region" description="Basic residues" evidence="3">
    <location>
        <begin position="17"/>
        <end position="32"/>
    </location>
</feature>
<feature type="compositionally biased region" description="Basic and acidic residues" evidence="3">
    <location>
        <begin position="319"/>
        <end position="337"/>
    </location>
</feature>
<feature type="active site" description="Proton acceptor" evidence="1 2">
    <location>
        <position position="177"/>
    </location>
</feature>
<feature type="binding site" evidence="1">
    <location>
        <begin position="61"/>
        <end position="69"/>
    </location>
    <ligand>
        <name>ATP</name>
        <dbReference type="ChEBI" id="CHEBI:30616"/>
    </ligand>
</feature>
<feature type="binding site" evidence="1">
    <location>
        <position position="84"/>
    </location>
    <ligand>
        <name>ATP</name>
        <dbReference type="ChEBI" id="CHEBI:30616"/>
    </ligand>
</feature>
<feature type="modified residue" description="Phosphothreonine; by autocatalysis" evidence="4 5 19 27 34">
    <location>
        <position position="210"/>
    </location>
</feature>
<feature type="modified residue" description="Phosphoserine" evidence="42 43 44">
    <location>
        <position position="413"/>
    </location>
</feature>
<feature type="modified residue" description="Phosphoserine" evidence="43">
    <location>
        <position position="487"/>
    </location>
</feature>
<feature type="modified residue" description="Phosphoserine" evidence="44">
    <location>
        <position position="632"/>
    </location>
</feature>
<feature type="cross-link" description="Glycyl lysine isopeptide (Lys-Gly) (interchain with G-Cter in ubiquitin)" evidence="45">
    <location>
        <position position="461"/>
    </location>
</feature>
<feature type="cross-link" description="Glycyl lysine isopeptide (Lys-Gly) (interchain with G-Cter in SUMO)" evidence="20">
    <location>
        <position position="549"/>
    </location>
</feature>
<feature type="mutagenesis site" description="Exhibits greater activity than wild-type SNFl in an immune complex assay where other associated molecules are present, but exhibits the same activity in a protein blot assay." evidence="7">
    <original>G</original>
    <variation>R</variation>
    <location>
        <position position="53"/>
    </location>
</feature>
<feature type="mutagenesis site" description="Inactivates the kinase activity without affecting protein levels." evidence="4 23">
    <original>K</original>
    <variation>R</variation>
    <location>
        <position position="84"/>
    </location>
</feature>
<feature type="mutagenesis site" description="Inactivates the kinase activity without affecting protein levels." evidence="4 7">
    <original>T</original>
    <variation>A</variation>
    <location>
        <position position="210"/>
    </location>
</feature>
<feature type="mutagenesis site" description="Alters kinase activation and biological activity, including enhanced allosteric subunit associations and increased oxidative stress resistance and life span; when associated with I-367." evidence="25">
    <original>G</original>
    <variation>A</variation>
    <location>
        <position position="357"/>
    </location>
</feature>
<feature type="mutagenesis site" description="Alters kinase activation and biological activity, including enhanced allosteric subunit associations and increased oxidative stress resistance and life span; when associated with A-357." evidence="25">
    <original>L</original>
    <variation>I</variation>
    <location>
        <position position="367"/>
    </location>
</feature>
<feature type="mutagenesis site" description="Decreases sumoylation of SNF1." evidence="20">
    <original>K</original>
    <variation>R</variation>
    <location>
        <position position="549"/>
    </location>
</feature>
<feature type="strand" evidence="48">
    <location>
        <begin position="56"/>
        <end position="62"/>
    </location>
</feature>
<feature type="helix" evidence="49">
    <location>
        <begin position="64"/>
        <end position="66"/>
    </location>
</feature>
<feature type="strand" evidence="48">
    <location>
        <begin position="69"/>
        <end position="73"/>
    </location>
</feature>
<feature type="turn" evidence="48">
    <location>
        <begin position="75"/>
        <end position="77"/>
    </location>
</feature>
<feature type="strand" evidence="48">
    <location>
        <begin position="80"/>
        <end position="87"/>
    </location>
</feature>
<feature type="helix" evidence="47">
    <location>
        <begin position="88"/>
        <end position="91"/>
    </location>
</feature>
<feature type="helix" evidence="48">
    <location>
        <begin position="97"/>
        <end position="109"/>
    </location>
</feature>
<feature type="strand" evidence="48">
    <location>
        <begin position="118"/>
        <end position="123"/>
    </location>
</feature>
<feature type="strand" evidence="48">
    <location>
        <begin position="125"/>
        <end position="133"/>
    </location>
</feature>
<feature type="helix" evidence="48">
    <location>
        <begin position="139"/>
        <end position="145"/>
    </location>
</feature>
<feature type="helix" evidence="48">
    <location>
        <begin position="151"/>
        <end position="170"/>
    </location>
</feature>
<feature type="turn" evidence="48">
    <location>
        <begin position="180"/>
        <end position="182"/>
    </location>
</feature>
<feature type="strand" evidence="48">
    <location>
        <begin position="183"/>
        <end position="185"/>
    </location>
</feature>
<feature type="strand" evidence="48">
    <location>
        <begin position="191"/>
        <end position="193"/>
    </location>
</feature>
<feature type="turn" evidence="49">
    <location>
        <begin position="207"/>
        <end position="209"/>
    </location>
</feature>
<feature type="helix" evidence="49">
    <location>
        <begin position="215"/>
        <end position="217"/>
    </location>
</feature>
<feature type="helix" evidence="48">
    <location>
        <begin position="220"/>
        <end position="223"/>
    </location>
</feature>
<feature type="strand" evidence="48">
    <location>
        <begin position="224"/>
        <end position="227"/>
    </location>
</feature>
<feature type="helix" evidence="48">
    <location>
        <begin position="232"/>
        <end position="247"/>
    </location>
</feature>
<feature type="helix" evidence="48">
    <location>
        <begin position="257"/>
        <end position="266"/>
    </location>
</feature>
<feature type="helix" evidence="48">
    <location>
        <begin position="277"/>
        <end position="286"/>
    </location>
</feature>
<feature type="helix" evidence="48">
    <location>
        <begin position="291"/>
        <end position="293"/>
    </location>
</feature>
<feature type="helix" evidence="48">
    <location>
        <begin position="297"/>
        <end position="302"/>
    </location>
</feature>
<feature type="helix" evidence="48">
    <location>
        <begin position="304"/>
        <end position="307"/>
    </location>
</feature>
<feature type="helix" evidence="48">
    <location>
        <begin position="312"/>
        <end position="314"/>
    </location>
</feature>
<feature type="turn" evidence="49">
    <location>
        <begin position="317"/>
        <end position="319"/>
    </location>
</feature>
<feature type="helix" evidence="50">
    <location>
        <begin position="471"/>
        <end position="473"/>
    </location>
</feature>
<feature type="helix" evidence="50">
    <location>
        <begin position="475"/>
        <end position="485"/>
    </location>
</feature>
<feature type="helix" evidence="50">
    <location>
        <begin position="489"/>
        <end position="492"/>
    </location>
</feature>
<feature type="strand" evidence="50">
    <location>
        <begin position="506"/>
        <end position="511"/>
    </location>
</feature>
<feature type="helix" evidence="50">
    <location>
        <begin position="515"/>
        <end position="529"/>
    </location>
</feature>
<feature type="strand" evidence="50">
    <location>
        <begin position="532"/>
        <end position="534"/>
    </location>
</feature>
<feature type="helix" evidence="50">
    <location>
        <begin position="538"/>
        <end position="540"/>
    </location>
</feature>
<feature type="strand" evidence="50">
    <location>
        <begin position="543"/>
        <end position="548"/>
    </location>
</feature>
<feature type="strand" evidence="50">
    <location>
        <begin position="565"/>
        <end position="576"/>
    </location>
</feature>
<feature type="strand" evidence="50">
    <location>
        <begin position="579"/>
        <end position="590"/>
    </location>
</feature>
<feature type="helix" evidence="46">
    <location>
        <begin position="607"/>
        <end position="610"/>
    </location>
</feature>
<feature type="helix" evidence="50">
    <location>
        <begin position="613"/>
        <end position="628"/>
    </location>
</feature>
<gene>
    <name evidence="40" type="primary">SNF1</name>
    <name type="synonym">CAT1</name>
    <name evidence="38" type="synonym">CCR1</name>
    <name type="synonym">GLC2</name>
    <name type="synonym">PAS14</name>
    <name type="ordered locus">YDR477W</name>
    <name type="ORF">D8035.20</name>
</gene>
<evidence type="ECO:0000255" key="1">
    <source>
        <dbReference type="PROSITE-ProRule" id="PRU00159"/>
    </source>
</evidence>
<evidence type="ECO:0000255" key="2">
    <source>
        <dbReference type="PROSITE-ProRule" id="PRU10027"/>
    </source>
</evidence>
<evidence type="ECO:0000256" key="3">
    <source>
        <dbReference type="SAM" id="MobiDB-lite"/>
    </source>
</evidence>
<evidence type="ECO:0000269" key="4">
    <source>
    </source>
</evidence>
<evidence type="ECO:0000269" key="5">
    <source>
    </source>
</evidence>
<evidence type="ECO:0000269" key="6">
    <source>
    </source>
</evidence>
<evidence type="ECO:0000269" key="7">
    <source>
    </source>
</evidence>
<evidence type="ECO:0000269" key="8">
    <source>
    </source>
</evidence>
<evidence type="ECO:0000269" key="9">
    <source>
    </source>
</evidence>
<evidence type="ECO:0000269" key="10">
    <source>
    </source>
</evidence>
<evidence type="ECO:0000269" key="11">
    <source>
    </source>
</evidence>
<evidence type="ECO:0000269" key="12">
    <source>
    </source>
</evidence>
<evidence type="ECO:0000269" key="13">
    <source>
    </source>
</evidence>
<evidence type="ECO:0000269" key="14">
    <source>
    </source>
</evidence>
<evidence type="ECO:0000269" key="15">
    <source>
    </source>
</evidence>
<evidence type="ECO:0000269" key="16">
    <source>
    </source>
</evidence>
<evidence type="ECO:0000269" key="17">
    <source>
    </source>
</evidence>
<evidence type="ECO:0000269" key="18">
    <source>
    </source>
</evidence>
<evidence type="ECO:0000269" key="19">
    <source>
    </source>
</evidence>
<evidence type="ECO:0000269" key="20">
    <source>
    </source>
</evidence>
<evidence type="ECO:0000269" key="21">
    <source>
    </source>
</evidence>
<evidence type="ECO:0000269" key="22">
    <source>
    </source>
</evidence>
<evidence type="ECO:0000269" key="23">
    <source>
    </source>
</evidence>
<evidence type="ECO:0000269" key="24">
    <source>
    </source>
</evidence>
<evidence type="ECO:0000269" key="25">
    <source>
    </source>
</evidence>
<evidence type="ECO:0000269" key="26">
    <source>
    </source>
</evidence>
<evidence type="ECO:0000269" key="27">
    <source>
    </source>
</evidence>
<evidence type="ECO:0000269" key="28">
    <source>
    </source>
</evidence>
<evidence type="ECO:0000269" key="29">
    <source>
    </source>
</evidence>
<evidence type="ECO:0000269" key="30">
    <source>
    </source>
</evidence>
<evidence type="ECO:0000269" key="31">
    <source>
    </source>
</evidence>
<evidence type="ECO:0000269" key="32">
    <source>
    </source>
</evidence>
<evidence type="ECO:0000269" key="33">
    <source>
    </source>
</evidence>
<evidence type="ECO:0000269" key="34">
    <source>
    </source>
</evidence>
<evidence type="ECO:0000269" key="35">
    <source>
    </source>
</evidence>
<evidence type="ECO:0000269" key="36">
    <source>
    </source>
</evidence>
<evidence type="ECO:0000269" key="37">
    <source>
    </source>
</evidence>
<evidence type="ECO:0000303" key="38">
    <source>
    </source>
</evidence>
<evidence type="ECO:0000303" key="39">
    <source>
    </source>
</evidence>
<evidence type="ECO:0000303" key="40">
    <source>
    </source>
</evidence>
<evidence type="ECO:0000305" key="41"/>
<evidence type="ECO:0007744" key="42">
    <source>
    </source>
</evidence>
<evidence type="ECO:0007744" key="43">
    <source>
    </source>
</evidence>
<evidence type="ECO:0007744" key="44">
    <source>
    </source>
</evidence>
<evidence type="ECO:0007744" key="45">
    <source>
    </source>
</evidence>
<evidence type="ECO:0007829" key="46">
    <source>
        <dbReference type="PDB" id="2QLV"/>
    </source>
</evidence>
<evidence type="ECO:0007829" key="47">
    <source>
        <dbReference type="PDB" id="3DAE"/>
    </source>
</evidence>
<evidence type="ECO:0007829" key="48">
    <source>
        <dbReference type="PDB" id="3HYH"/>
    </source>
</evidence>
<evidence type="ECO:0007829" key="49">
    <source>
        <dbReference type="PDB" id="3MN3"/>
    </source>
</evidence>
<evidence type="ECO:0007829" key="50">
    <source>
        <dbReference type="PDB" id="3T4N"/>
    </source>
</evidence>
<accession>P06782</accession>
<accession>D6VTA0</accession>
<keyword id="KW-0002">3D-structure</keyword>
<keyword id="KW-0067">ATP-binding</keyword>
<keyword id="KW-0119">Carbohydrate metabolism</keyword>
<keyword id="KW-0963">Cytoplasm</keyword>
<keyword id="KW-0903">Direct protein sequencing</keyword>
<keyword id="KW-1017">Isopeptide bond</keyword>
<keyword id="KW-0418">Kinase</keyword>
<keyword id="KW-0472">Membrane</keyword>
<keyword id="KW-0547">Nucleotide-binding</keyword>
<keyword id="KW-0539">Nucleus</keyword>
<keyword id="KW-0597">Phosphoprotein</keyword>
<keyword id="KW-1185">Reference proteome</keyword>
<keyword id="KW-0723">Serine/threonine-protein kinase</keyword>
<keyword id="KW-0808">Transferase</keyword>
<keyword id="KW-0832">Ubl conjugation</keyword>
<sequence>MSSNNNTNTAPANANSSHHHHHHHHHHHHHGHGGSNSTLNNPKSSLADGAHIGNYQIVKTLGEGSFGKVKLAYHTTTGQKVALKIINKKVLAKSDMQGRIEREISYLRLLRHPHIIKLYDVIKSKDEIIMVIEYAGNELFDYIVQRDKMSEQEARRFFQQIISAVEYCHRHKIVHRDLKPENLLLDEHLNVKIADFGLSNIMTDGNFLKTSCGSPNYAAPEVISGKLYAGPEVDVWSCGVILYVMLCRRLPFDDESIPVLFKNISNGVYTLPKFLSPGAAGLIKRMLIVNPLNRISIHEIMQDDWFKVDLPEYLLPPDLKPHPEEENENNDSKKDGSSPDNDEIDDNLVNILSSTMGYEKDEIYESLESSEDTPAFNEIRDAYMLIKENKSLIKDMKANKSVSDELDTFLSQSPPTFQQQSKSHQKSQVDHETAKQHARRMASAITQQRTYHQSPFMDQYKEEDSTVSILPTSLPQIHRANMLAQGSPAASKISPLVTKKSKTRWHFGIRSRSYPLDVMGEIYIALKNLGAEWAKPSEEDLWTIKLRWKYDIGNKTNTNEKIPDLMKMVIQLFQIETNNYLVDFKFDGWESSYGDDTTVSNISEDEMSTFSAYPFLHLTTKLIMELAVNSQSN</sequence>
<reference key="1">
    <citation type="journal article" date="1986" name="Science">
        <title>A yeast gene that is essential for release from glucose repression encodes a protein kinase.</title>
        <authorList>
            <person name="Celenza J.L."/>
            <person name="Carlson M."/>
        </authorList>
    </citation>
    <scope>NUCLEOTIDE SEQUENCE [GENOMIC DNA]</scope>
    <scope>FUNCTION</scope>
    <scope>CATALYTIC ACTIVITY</scope>
</reference>
<reference key="2">
    <citation type="journal article" date="1997" name="Nature">
        <title>The nucleotide sequence of Saccharomyces cerevisiae chromosome IV.</title>
        <authorList>
            <person name="Jacq C."/>
            <person name="Alt-Moerbe J."/>
            <person name="Andre B."/>
            <person name="Arnold W."/>
            <person name="Bahr A."/>
            <person name="Ballesta J.P.G."/>
            <person name="Bargues M."/>
            <person name="Baron L."/>
            <person name="Becker A."/>
            <person name="Biteau N."/>
            <person name="Bloecker H."/>
            <person name="Blugeon C."/>
            <person name="Boskovic J."/>
            <person name="Brandt P."/>
            <person name="Brueckner M."/>
            <person name="Buitrago M.J."/>
            <person name="Coster F."/>
            <person name="Delaveau T."/>
            <person name="del Rey F."/>
            <person name="Dujon B."/>
            <person name="Eide L.G."/>
            <person name="Garcia-Cantalejo J.M."/>
            <person name="Goffeau A."/>
            <person name="Gomez-Peris A."/>
            <person name="Granotier C."/>
            <person name="Hanemann V."/>
            <person name="Hankeln T."/>
            <person name="Hoheisel J.D."/>
            <person name="Jaeger W."/>
            <person name="Jimenez A."/>
            <person name="Jonniaux J.-L."/>
            <person name="Kraemer C."/>
            <person name="Kuester H."/>
            <person name="Laamanen P."/>
            <person name="Legros Y."/>
            <person name="Louis E.J."/>
            <person name="Moeller-Rieker S."/>
            <person name="Monnet A."/>
            <person name="Moro M."/>
            <person name="Mueller-Auer S."/>
            <person name="Nussbaumer B."/>
            <person name="Paricio N."/>
            <person name="Paulin L."/>
            <person name="Perea J."/>
            <person name="Perez-Alonso M."/>
            <person name="Perez-Ortin J.E."/>
            <person name="Pohl T.M."/>
            <person name="Prydz H."/>
            <person name="Purnelle B."/>
            <person name="Rasmussen S.W."/>
            <person name="Remacha M.A."/>
            <person name="Revuelta J.L."/>
            <person name="Rieger M."/>
            <person name="Salom D."/>
            <person name="Saluz H.P."/>
            <person name="Saiz J.E."/>
            <person name="Saren A.-M."/>
            <person name="Schaefer M."/>
            <person name="Scharfe M."/>
            <person name="Schmidt E.R."/>
            <person name="Schneider C."/>
            <person name="Scholler P."/>
            <person name="Schwarz S."/>
            <person name="Soler-Mira A."/>
            <person name="Urrestarazu L.A."/>
            <person name="Verhasselt P."/>
            <person name="Vissers S."/>
            <person name="Voet M."/>
            <person name="Volckaert G."/>
            <person name="Wagner G."/>
            <person name="Wambutt R."/>
            <person name="Wedler E."/>
            <person name="Wedler H."/>
            <person name="Woelfl S."/>
            <person name="Harris D.E."/>
            <person name="Bowman S."/>
            <person name="Brown D."/>
            <person name="Churcher C.M."/>
            <person name="Connor R."/>
            <person name="Dedman K."/>
            <person name="Gentles S."/>
            <person name="Hamlin N."/>
            <person name="Hunt S."/>
            <person name="Jones L."/>
            <person name="McDonald S."/>
            <person name="Murphy L.D."/>
            <person name="Niblett D."/>
            <person name="Odell C."/>
            <person name="Oliver K."/>
            <person name="Rajandream M.A."/>
            <person name="Richards C."/>
            <person name="Shore L."/>
            <person name="Walsh S.V."/>
            <person name="Barrell B.G."/>
            <person name="Dietrich F.S."/>
            <person name="Mulligan J.T."/>
            <person name="Allen E."/>
            <person name="Araujo R."/>
            <person name="Aviles E."/>
            <person name="Berno A."/>
            <person name="Carpenter J."/>
            <person name="Chen E."/>
            <person name="Cherry J.M."/>
            <person name="Chung E."/>
            <person name="Duncan M."/>
            <person name="Hunicke-Smith S."/>
            <person name="Hyman R.W."/>
            <person name="Komp C."/>
            <person name="Lashkari D."/>
            <person name="Lew H."/>
            <person name="Lin D."/>
            <person name="Mosedale D."/>
            <person name="Nakahara K."/>
            <person name="Namath A."/>
            <person name="Oefner P."/>
            <person name="Oh C."/>
            <person name="Petel F.X."/>
            <person name="Roberts D."/>
            <person name="Schramm S."/>
            <person name="Schroeder M."/>
            <person name="Shogren T."/>
            <person name="Shroff N."/>
            <person name="Winant A."/>
            <person name="Yelton M.A."/>
            <person name="Botstein D."/>
            <person name="Davis R.W."/>
            <person name="Johnston M."/>
            <person name="Andrews S."/>
            <person name="Brinkman R."/>
            <person name="Cooper J."/>
            <person name="Ding H."/>
            <person name="Du Z."/>
            <person name="Favello A."/>
            <person name="Fulton L."/>
            <person name="Gattung S."/>
            <person name="Greco T."/>
            <person name="Hallsworth K."/>
            <person name="Hawkins J."/>
            <person name="Hillier L.W."/>
            <person name="Jier M."/>
            <person name="Johnson D."/>
            <person name="Johnston L."/>
            <person name="Kirsten J."/>
            <person name="Kucaba T."/>
            <person name="Langston Y."/>
            <person name="Latreille P."/>
            <person name="Le T."/>
            <person name="Mardis E."/>
            <person name="Menezes S."/>
            <person name="Miller N."/>
            <person name="Nhan M."/>
            <person name="Pauley A."/>
            <person name="Peluso D."/>
            <person name="Rifkin L."/>
            <person name="Riles L."/>
            <person name="Taich A."/>
            <person name="Trevaskis E."/>
            <person name="Vignati D."/>
            <person name="Wilcox L."/>
            <person name="Wohldman P."/>
            <person name="Vaudin M."/>
            <person name="Wilson R."/>
            <person name="Waterston R."/>
            <person name="Albermann K."/>
            <person name="Hani J."/>
            <person name="Heumann K."/>
            <person name="Kleine K."/>
            <person name="Mewes H.-W."/>
            <person name="Zollner A."/>
            <person name="Zaccaria P."/>
        </authorList>
    </citation>
    <scope>NUCLEOTIDE SEQUENCE [LARGE SCALE GENOMIC DNA]</scope>
    <source>
        <strain>ATCC 204508 / S288c</strain>
    </source>
</reference>
<reference key="3">
    <citation type="journal article" date="2014" name="G3 (Bethesda)">
        <title>The reference genome sequence of Saccharomyces cerevisiae: Then and now.</title>
        <authorList>
            <person name="Engel S.R."/>
            <person name="Dietrich F.S."/>
            <person name="Fisk D.G."/>
            <person name="Binkley G."/>
            <person name="Balakrishnan R."/>
            <person name="Costanzo M.C."/>
            <person name="Dwight S.S."/>
            <person name="Hitz B.C."/>
            <person name="Karra K."/>
            <person name="Nash R.S."/>
            <person name="Weng S."/>
            <person name="Wong E.D."/>
            <person name="Lloyd P."/>
            <person name="Skrzypek M.S."/>
            <person name="Miyasato S.R."/>
            <person name="Simison M."/>
            <person name="Cherry J.M."/>
        </authorList>
    </citation>
    <scope>GENOME REANNOTATION</scope>
    <source>
        <strain>ATCC 204508 / S288c</strain>
    </source>
</reference>
<reference key="4">
    <citation type="journal article" date="1994" name="J. Biol. Chem.">
        <title>Mammalian AMP-activated protein kinase shares structural and functional homology with the catalytic domain of yeast Snf1 protein kinase.</title>
        <authorList>
            <person name="Mitchelhill K.I."/>
            <person name="Stapleton D."/>
            <person name="Gao G."/>
            <person name="House C."/>
            <person name="Michell B."/>
            <person name="Katsis F."/>
            <person name="Witters L.A."/>
            <person name="Kemp B.E."/>
        </authorList>
    </citation>
    <scope>PROTEIN SEQUENCE OF 274-284; 528-539 AND 622-630</scope>
    <scope>PHOSPHORYLATION AT THR-210</scope>
</reference>
<reference key="5">
    <citation type="journal article" date="1984" name="Mol. Cell. Biol.">
        <title>Cloning and genetic mapping of SNF1, a gene required for expression of glucose-repressible genes in Saccharomyces cerevisiae.</title>
        <authorList>
            <person name="Celenza J.L."/>
            <person name="Carlson M."/>
        </authorList>
    </citation>
    <scope>IDENTIFICATION</scope>
    <scope>FUNCTION</scope>
</reference>
<reference key="6">
    <citation type="journal article" date="1984" name="Mol. Cell. Biol.">
        <title>Structure and expression of the SNF1 gene of Saccharomyces cerevisiae.</title>
        <authorList>
            <person name="Celenza J.L."/>
            <person name="Carlson M."/>
        </authorList>
    </citation>
    <scope>INDUCTION</scope>
</reference>
<reference key="7">
    <citation type="journal article" date="1988" name="J. Bacteriol.">
        <title>High-affinity glucose transport in Saccharomyces cerevisiae is under general glucose repression control.</title>
        <authorList>
            <person name="Bisson L.F."/>
        </authorList>
    </citation>
    <scope>FUNCTION</scope>
</reference>
<reference key="8">
    <citation type="journal article" date="1989" name="Mol. Cell. Biol.">
        <title>Mutational analysis of the Saccharomyces cerevisiae SNF1 protein kinase and evidence for functional interaction with the SNF4 protein.</title>
        <authorList>
            <person name="Celenza J.L."/>
            <person name="Carlson M."/>
        </authorList>
    </citation>
    <scope>MUTAGENESIS OF LYS-84</scope>
    <scope>CATALYTIC ACTIVITY</scope>
    <scope>INTERACTION WITH SNF4</scope>
    <scope>ACTIVITY REGULATION</scope>
</reference>
<reference key="9">
    <citation type="journal article" date="1989" name="Mol. Cell. Biol.">
        <title>Molecular analysis of the SNF4 gene of Saccharomyces cerevisiae: evidence for physical association of the SNF4 protein with the SNF1 protein kinase.</title>
        <authorList>
            <person name="Celenza J.L."/>
            <person name="Eng F.J."/>
            <person name="Carlson M."/>
        </authorList>
    </citation>
    <scope>INTERACTION WITH SNF4</scope>
</reference>
<reference key="10">
    <citation type="journal article" date="1991" name="Mol. Gen. Genet.">
        <title>The CCR1 (SNF1) and SCH9 protein kinases act independently of cAMP-dependent protein kinase and the transcriptional activator ADR1 in controlling yeast ADH2 expression.</title>
        <authorList>
            <person name="Denis C.L."/>
            <person name="Audino D.C."/>
        </authorList>
    </citation>
    <scope>FUNCTION</scope>
</reference>
<reference key="11">
    <citation type="journal article" date="1994" name="Mol. Cell. Biol.">
        <title>Glucose repression of yeast mitochondrial transcription: kinetics of derepression and role of nuclear genes.</title>
        <authorList>
            <person name="Ulery T.L."/>
            <person name="Jang S.H."/>
            <person name="Jaehning J.A."/>
        </authorList>
    </citation>
    <scope>FUNCTION</scope>
</reference>
<reference key="12">
    <citation type="journal article" date="1992" name="Genetics">
        <title>N-terminal mutations modulate yeast SNF1 protein kinase function.</title>
        <authorList>
            <person name="Estruch F."/>
            <person name="Treitel M.A."/>
            <person name="Yang X."/>
            <person name="Carlson M."/>
        </authorList>
    </citation>
    <scope>MUTAGENESIS OF GLY-53 AND THR-210</scope>
</reference>
<reference key="13">
    <citation type="journal article" date="1994" name="EMBO J.">
        <title>A family of proteins containing a conserved domain that mediates interaction with the yeast SNF1 protein kinase complex.</title>
        <authorList>
            <person name="Yang X."/>
            <person name="Jiang R."/>
            <person name="Carlson M."/>
        </authorList>
    </citation>
    <scope>INTERACTION WITH SIP1; SIP2 AND GAL83</scope>
</reference>
<reference key="14">
    <citation type="journal article" date="1996" name="Mol. Cell. Biol.">
        <title>Yeast SNF1 protein kinase interacts with SIP4, a C6 zinc cluster transcriptional activator: a new role for SNF1 in the glucose response.</title>
        <authorList>
            <person name="Lesage P."/>
            <person name="Yang X."/>
            <person name="Carlson M."/>
        </authorList>
    </citation>
    <scope>FUNCTION</scope>
    <scope>INTERACTION WITH SIP4</scope>
</reference>
<reference key="15">
    <citation type="journal article" date="1997" name="Mol. Cell. Biol.">
        <title>The Snf1 protein kinase and its activating subunit, Snf4, interact with distinct domains of the Sip1/Sip2/Gal83 component in the kinase complex.</title>
        <authorList>
            <person name="Jiang R."/>
            <person name="Carlson M."/>
        </authorList>
    </citation>
    <scope>INTERACTION WITH SNF4; SIP1; SIP2 AND GAL83</scope>
</reference>
<reference key="16">
    <citation type="journal article" date="2001" name="J. Biol. Chem.">
        <title>Regulation of Snf1 kinase. Activation requires phosphorylation of threonine 210 by an upstream kinase as well as a distinct step mediated by the Snf4 subunit.</title>
        <authorList>
            <person name="McCartney R.R."/>
            <person name="Schmidt M.C."/>
        </authorList>
    </citation>
    <scope>PHOSPHORYLATION AT THR-210</scope>
    <scope>MUTAGENESIS OF LYS-84 AND THR-210</scope>
</reference>
<reference key="17">
    <citation type="journal article" date="2003" name="Mol. Cell. Biol.">
        <title>Yeast Pak1 kinase associates with and activates Snf1.</title>
        <authorList>
            <person name="Nath N."/>
            <person name="McCartney R.R."/>
            <person name="Schmidt M.C."/>
        </authorList>
    </citation>
    <scope>PHOSPHORYLATION AT THR-210</scope>
    <scope>INTERACTION WITH SAK1</scope>
</reference>
<reference key="18">
    <citation type="journal article" date="2003" name="Nature">
        <title>Global analysis of protein expression in yeast.</title>
        <authorList>
            <person name="Ghaemmaghami S."/>
            <person name="Huh W.-K."/>
            <person name="Bower K."/>
            <person name="Howson R.W."/>
            <person name="Belle A."/>
            <person name="Dephoure N."/>
            <person name="O'Shea E.K."/>
            <person name="Weissman J.S."/>
        </authorList>
    </citation>
    <scope>LEVEL OF PROTEIN EXPRESSION [LARGE SCALE ANALYSIS]</scope>
</reference>
<reference key="19">
    <citation type="journal article" date="2004" name="Mol. Cell. Biol.">
        <title>Key role of Ser562/661 in Snf1-dependent regulation of Cat8p in Saccharomyces cerevisiae and Kluyveromyces lactis.</title>
        <authorList>
            <person name="Charbon G."/>
            <person name="Breunig K.D."/>
            <person name="Wattiez R."/>
            <person name="Vandenhaute J."/>
            <person name="Noel-Georis I."/>
        </authorList>
    </citation>
    <scope>FUNCTION IN PHOSPHORYLATION OF CAT8</scope>
</reference>
<reference key="20">
    <citation type="journal article" date="2005" name="EMBO J.">
        <title>Histone H3 phosphorylation can promote TBP recruitment through distinct promoter-specific mechanisms.</title>
        <authorList>
            <person name="Lo W.-S."/>
            <person name="Gamache E.R."/>
            <person name="Henry K.W."/>
            <person name="Yang D."/>
            <person name="Pillus L."/>
            <person name="Berger S.L."/>
        </authorList>
    </citation>
    <scope>FUNCTION IN PHOSPHORYLATION OF HISTONE H3</scope>
    <scope>IDENTIFICATION IN THE SNF1 KINASE COMPLEX</scope>
</reference>
<reference key="21">
    <citation type="journal article" date="2005" name="FEBS Lett.">
        <title>Glucose deprivation mediates interaction between CTDK-I and Snf1 in Saccharomyces cerevisiae.</title>
        <authorList>
            <person name="Van Driessche B."/>
            <person name="Coddens S."/>
            <person name="Van Mullem V."/>
            <person name="Vandenhaute J."/>
        </authorList>
    </citation>
    <scope>INTERACTION WITH CTK1</scope>
</reference>
<reference key="22">
    <citation type="journal article" date="2006" name="J. Biol. Chem.">
        <title>Subunits of the Snf1 kinase heterotrimer show interdependence for association and activity.</title>
        <authorList>
            <person name="Elbing K."/>
            <person name="Rubenstein E.M."/>
            <person name="McCartney R.R."/>
            <person name="Schmidt M.C."/>
        </authorList>
    </citation>
    <scope>PHOSPHORYLATION</scope>
    <scope>INTERACTION WITH SAK1</scope>
</reference>
<reference key="23">
    <citation type="journal article" date="2007" name="Genetics">
        <title>Glucose-responsive regulators of gene expression in Saccharomyces cerevisiae function at the nuclear periphery via a reverse recruitment mechanism.</title>
        <authorList>
            <person name="Sarma N.J."/>
            <person name="Haley T.M."/>
            <person name="Barbara K.E."/>
            <person name="Buford T.D."/>
            <person name="Willis K.A."/>
            <person name="Santangelo G.M."/>
        </authorList>
    </citation>
    <scope>SUBCELLULAR LOCATION</scope>
</reference>
<reference key="24">
    <citation type="journal article" date="2007" name="J. Proteome Res.">
        <title>Large-scale phosphorylation analysis of alpha-factor-arrested Saccharomyces cerevisiae.</title>
        <authorList>
            <person name="Li X."/>
            <person name="Gerber S.A."/>
            <person name="Rudner A.D."/>
            <person name="Beausoleil S.A."/>
            <person name="Haas W."/>
            <person name="Villen J."/>
            <person name="Elias J.E."/>
            <person name="Gygi S.P."/>
        </authorList>
    </citation>
    <scope>PHOSPHORYLATION [LARGE SCALE ANALYSIS] AT SER-413</scope>
    <scope>IDENTIFICATION BY MASS SPECTROMETRY [LARGE SCALE ANALYSIS]</scope>
    <source>
        <strain>ADR376</strain>
    </source>
</reference>
<reference key="25">
    <citation type="journal article" date="2008" name="Mol. Cell. Proteomics">
        <title>A multidimensional chromatography technology for in-depth phosphoproteome analysis.</title>
        <authorList>
            <person name="Albuquerque C.P."/>
            <person name="Smolka M.B."/>
            <person name="Payne S.H."/>
            <person name="Bafna V."/>
            <person name="Eng J."/>
            <person name="Zhou H."/>
        </authorList>
    </citation>
    <scope>PHOSPHORYLATION [LARGE SCALE ANALYSIS] AT SER-413 AND SER-487</scope>
    <scope>IDENTIFICATION BY MASS SPECTROMETRY [LARGE SCALE ANALYSIS]</scope>
</reference>
<reference key="26">
    <citation type="journal article" date="2009" name="Science">
        <title>Global analysis of Cdk1 substrate phosphorylation sites provides insights into evolution.</title>
        <authorList>
            <person name="Holt L.J."/>
            <person name="Tuch B.B."/>
            <person name="Villen J."/>
            <person name="Johnson A.D."/>
            <person name="Gygi S.P."/>
            <person name="Morgan D.O."/>
        </authorList>
    </citation>
    <scope>PHOSPHORYLATION [LARGE SCALE ANALYSIS] AT SER-413 AND SER-632</scope>
    <scope>IDENTIFICATION BY MASS SPECTROMETRY [LARGE SCALE ANALYSIS]</scope>
</reference>
<reference key="27">
    <citation type="journal article" date="2012" name="Proteomics">
        <title>Sites of ubiquitin attachment in Saccharomyces cerevisiae.</title>
        <authorList>
            <person name="Starita L.M."/>
            <person name="Lo R.S."/>
            <person name="Eng J.K."/>
            <person name="von Haller P.D."/>
            <person name="Fields S."/>
        </authorList>
    </citation>
    <scope>UBIQUITINATION [LARGE SCALE ANALYSIS] AT LYS-461</scope>
    <scope>IDENTIFICATION BY MASS SPECTROMETRY [LARGE SCALE ANALYSIS]</scope>
</reference>
<reference key="28">
    <citation type="journal article" date="2013" name="Proc. Natl. Acad. Sci. U.S.A.">
        <title>Sumoylation regulates the SNF1 protein kinase.</title>
        <authorList>
            <person name="Simpson-Lavy K.J."/>
            <person name="Johnston M."/>
        </authorList>
    </citation>
    <scope>SUMOYLATION AT LYS-549 BY MMS21</scope>
    <scope>MUTAGENESIS OF LYS-549</scope>
</reference>
<reference key="29">
    <citation type="journal article" date="2015" name="Biochem. J.">
        <title>Protein kinase Snf1 is involved in the proper regulation of the unfolded protein response in Saccharomyces cerevisiae.</title>
        <authorList>
            <person name="Ferrer-Dalmau J."/>
            <person name="Randez-Gil F."/>
            <person name="Marquina M."/>
            <person name="Prieto J.A."/>
            <person name="Casamayor A."/>
        </authorList>
    </citation>
    <scope>FUNCTION</scope>
</reference>
<reference key="30">
    <citation type="journal article" date="2015" name="J. Biol. Chem.">
        <title>The SNF1 kinase ubiquitin-associated domain restrains its activation, activity, and the yeast life span.</title>
        <authorList>
            <person name="Jiao R."/>
            <person name="Postnikoff S."/>
            <person name="Harkness T.A."/>
            <person name="Arnason T.G."/>
        </authorList>
    </citation>
    <scope>DOMAIN</scope>
    <scope>MUTAGENESIS OF GLY-357 AND LEU-367</scope>
    <scope>FUNCTION</scope>
    <scope>SUBCELLULAR LOCATION</scope>
</reference>
<reference key="31">
    <citation type="journal article" date="2015" name="J. Biol. Chem.">
        <title>Snf1 phosphorylates adenylate cyclase and negatively regulates protein kinase A-dependent transcription in Saccharomyces cerevisiae.</title>
        <authorList>
            <person name="Nicastro R."/>
            <person name="Tripodi F."/>
            <person name="Gaggini M."/>
            <person name="Castoldi A."/>
            <person name="Reghellin V."/>
            <person name="Nonnis S."/>
            <person name="Tedeschi G."/>
            <person name="Coccetti P."/>
        </authorList>
    </citation>
    <scope>FUNCTION</scope>
    <scope>INTERACTION WITH CYR1</scope>
</reference>
<reference key="32">
    <citation type="journal article" date="2015" name="Mol. Biol. Cell">
        <title>PAS kinase is activated by direct SNF1-dependent phosphorylation and mediates inhibition of TORC1 through the phosphorylation and activation of Pbp1.</title>
        <authorList>
            <person name="DeMille D."/>
            <person name="Badal B.D."/>
            <person name="Evans J.B."/>
            <person name="Mathis A.D."/>
            <person name="Anderson J.F."/>
            <person name="Grose J.H."/>
        </authorList>
    </citation>
    <scope>FUNCTION</scope>
</reference>
<reference key="33">
    <citation type="journal article" date="2015" name="Mol. Cell. Biol.">
        <title>Snf1-dependent transcription confers glucose-induced decay upon the mRNA product.</title>
        <authorList>
            <person name="Braun K.A."/>
            <person name="Dombek K.M."/>
            <person name="Young E.T."/>
        </authorList>
    </citation>
    <scope>FUNCTION</scope>
</reference>
<reference key="34">
    <citation type="journal article" date="2015" name="PLoS Genet.">
        <title>The Saccharomyces cerevisiae AMPK, Snf1, negatively regulates the Hog1 MAPK pathway in ER stress response.</title>
        <authorList>
            <person name="Mizuno T."/>
            <person name="Masuda Y."/>
            <person name="Irie K."/>
        </authorList>
    </citation>
    <scope>FUNCTION</scope>
    <scope>PHOSPHORYLATION AT THR-210</scope>
</reference>
<reference key="35">
    <citation type="journal article" date="2005" name="Biochem. Biophys. Res. Commun.">
        <title>Crystal structure of the protein kinase domain of yeast AMP-activated protein kinase Snf1.</title>
        <authorList>
            <person name="Rudolph M.J."/>
            <person name="Amodeo G.A."/>
            <person name="Bai Y."/>
            <person name="Tong L."/>
        </authorList>
    </citation>
    <scope>X-RAY CRYSTALLOGRAPHY (2.20 ANGSTROMS) OF 41-315</scope>
    <scope>DOMAIN</scope>
</reference>
<reference key="36">
    <citation type="journal article" date="2006" name="Structure">
        <title>Structure and dimerization of the kinase domain from yeast Snf1, a member of the Snf1/AMPK protein family.</title>
        <authorList>
            <person name="Nayak V."/>
            <person name="Zhao K."/>
            <person name="Wyce A."/>
            <person name="Schwartz M.F."/>
            <person name="Lo W.S."/>
            <person name="Berger S.L."/>
            <person name="Marmorstein R."/>
        </authorList>
    </citation>
    <scope>X-RAY CRYSTALLOGRAPHY (2.80 ANGSTROMS) OF 46-319</scope>
    <scope>DOMAIN</scope>
</reference>
<reference key="37">
    <citation type="journal article" date="2007" name="Nature">
        <title>Crystal structure of the heterotrimer core of Saccharomyces cerevisiae AMPK homologue SNF1.</title>
        <authorList>
            <person name="Amodeo G.A."/>
            <person name="Rudolph M.J."/>
            <person name="Tong L."/>
        </authorList>
    </citation>
    <scope>X-RAY CRYSTALLOGRAPHY (2.60 ANGSTROMS) OF 460-630 IN COMPLEX WITH SNF4 AND SIP2</scope>
    <scope>DOMAIN</scope>
    <scope>ACTIVITY REGULATION</scope>
</reference>
<reference key="38">
    <citation type="journal article" date="2009" name="Nature">
        <title>Structural insight into the autoinhibition mechanism of AMP-activated protein kinase.</title>
        <authorList>
            <person name="Chen L."/>
            <person name="Jiao Z.H."/>
            <person name="Zheng L.S."/>
            <person name="Zhang Y.Y."/>
            <person name="Xie S.T."/>
            <person name="Wang Z.X."/>
            <person name="Wu J.W."/>
        </authorList>
    </citation>
    <scope>X-RAY CRYSTALLOGRAPHY (2.90 ANGSTROMS) OF 41-315</scope>
    <scope>DOMAIN</scope>
    <scope>PHOSPHORYLATION AT THR-210</scope>
</reference>
<reference key="39">
    <citation type="journal article" date="2010" name="Acta Crystallogr. F">
        <title>An inhibited conformation for the protein kinase domain of the Saccharomyces cerevisiae AMPK homolog Snf1.</title>
        <authorList>
            <person name="Rudolph M.J."/>
            <person name="Amodeo G.A."/>
            <person name="Tong L."/>
        </authorList>
    </citation>
    <scope>X-RAY CRYSTALLOGRAPHY (2.38 ANGSTROMS) OF 50-320</scope>
    <scope>DOMAIN</scope>
</reference>
<reference key="40">
    <citation type="journal article" date="2011" name="Cell Metab.">
        <title>ADP regulates SNF1, the Saccharomyces cerevisiae homolog of AMP-activated protein kinase.</title>
        <authorList>
            <person name="Mayer F.V."/>
            <person name="Heath R."/>
            <person name="Underwood E."/>
            <person name="Sanders M.J."/>
            <person name="Carmena D."/>
            <person name="McCartney R.R."/>
            <person name="Leiper F.C."/>
            <person name="Xiao B."/>
            <person name="Jing C."/>
            <person name="Walker P.A."/>
            <person name="Haire L.F."/>
            <person name="Ogrodowicz R."/>
            <person name="Martin S.R."/>
            <person name="Schmidt M.C."/>
            <person name="Gamblin S.J."/>
            <person name="Carling D."/>
        </authorList>
    </citation>
    <scope>X-RAY CRYSTALLOGRAPHY (2.30 ANGSTROMS) OF 457-633</scope>
    <scope>PHOSPHORYLATION AT THR-210</scope>
</reference>
<dbReference type="EC" id="2.7.11.1" evidence="9 23 30"/>
<dbReference type="EMBL" id="M13971">
    <property type="protein sequence ID" value="AAA35058.1"/>
    <property type="molecule type" value="Genomic_DNA"/>
</dbReference>
<dbReference type="EMBL" id="U33050">
    <property type="protein sequence ID" value="AAB64904.1"/>
    <property type="molecule type" value="Genomic_DNA"/>
</dbReference>
<dbReference type="EMBL" id="BK006938">
    <property type="protein sequence ID" value="DAA12310.1"/>
    <property type="molecule type" value="Genomic_DNA"/>
</dbReference>
<dbReference type="PIR" id="A26030">
    <property type="entry name" value="A26030"/>
</dbReference>
<dbReference type="RefSeq" id="NP_010765.3">
    <property type="nucleotide sequence ID" value="NM_001180785.3"/>
</dbReference>
<dbReference type="PDB" id="2FH9">
    <property type="method" value="X-ray"/>
    <property type="resolution" value="2.80 A"/>
    <property type="chains" value="A=46-319"/>
</dbReference>
<dbReference type="PDB" id="2QLV">
    <property type="method" value="X-ray"/>
    <property type="resolution" value="2.60 A"/>
    <property type="chains" value="A/D=460-630"/>
</dbReference>
<dbReference type="PDB" id="3DAE">
    <property type="method" value="X-ray"/>
    <property type="resolution" value="2.90 A"/>
    <property type="chains" value="A/B=41-315"/>
</dbReference>
<dbReference type="PDB" id="3HYH">
    <property type="method" value="X-ray"/>
    <property type="resolution" value="2.20 A"/>
    <property type="chains" value="A/B=41-315"/>
</dbReference>
<dbReference type="PDB" id="3MN3">
    <property type="method" value="X-ray"/>
    <property type="resolution" value="2.38 A"/>
    <property type="chains" value="A=50-320"/>
</dbReference>
<dbReference type="PDB" id="3T4N">
    <property type="method" value="X-ray"/>
    <property type="resolution" value="2.30 A"/>
    <property type="chains" value="A=457-633"/>
</dbReference>
<dbReference type="PDB" id="3TDH">
    <property type="method" value="X-ray"/>
    <property type="resolution" value="2.30 A"/>
    <property type="chains" value="A=457-633"/>
</dbReference>
<dbReference type="PDB" id="3TE5">
    <property type="method" value="X-ray"/>
    <property type="resolution" value="2.50 A"/>
    <property type="chains" value="A=457-633"/>
</dbReference>
<dbReference type="PDBsum" id="2FH9"/>
<dbReference type="PDBsum" id="2QLV"/>
<dbReference type="PDBsum" id="3DAE"/>
<dbReference type="PDBsum" id="3HYH"/>
<dbReference type="PDBsum" id="3MN3"/>
<dbReference type="PDBsum" id="3T4N"/>
<dbReference type="PDBsum" id="3TDH"/>
<dbReference type="PDBsum" id="3TE5"/>
<dbReference type="SMR" id="P06782"/>
<dbReference type="BioGRID" id="32529">
    <property type="interactions" value="865"/>
</dbReference>
<dbReference type="ComplexPortal" id="CPX-231">
    <property type="entry name" value="Snf1 protein kinase complex variant GAL83"/>
</dbReference>
<dbReference type="ComplexPortal" id="CPX-232">
    <property type="entry name" value="Snf1 protein kinase complex variant SIP1"/>
</dbReference>
<dbReference type="ComplexPortal" id="CPX-2800">
    <property type="entry name" value="Snf1 protein kinase complex variant SIP2"/>
</dbReference>
<dbReference type="DIP" id="DIP-18N"/>
<dbReference type="FunCoup" id="P06782">
    <property type="interactions" value="1340"/>
</dbReference>
<dbReference type="IntAct" id="P06782">
    <property type="interactions" value="58"/>
</dbReference>
<dbReference type="MINT" id="P06782"/>
<dbReference type="STRING" id="4932.YDR477W"/>
<dbReference type="iPTMnet" id="P06782"/>
<dbReference type="PaxDb" id="4932-YDR477W"/>
<dbReference type="PeptideAtlas" id="P06782"/>
<dbReference type="EnsemblFungi" id="YDR477W_mRNA">
    <property type="protein sequence ID" value="YDR477W"/>
    <property type="gene ID" value="YDR477W"/>
</dbReference>
<dbReference type="GeneID" id="852088"/>
<dbReference type="KEGG" id="sce:YDR477W"/>
<dbReference type="AGR" id="SGD:S000002885"/>
<dbReference type="SGD" id="S000002885">
    <property type="gene designation" value="SNF1"/>
</dbReference>
<dbReference type="VEuPathDB" id="FungiDB:YDR477W"/>
<dbReference type="eggNOG" id="KOG0583">
    <property type="taxonomic scope" value="Eukaryota"/>
</dbReference>
<dbReference type="GeneTree" id="ENSGT00940000167424"/>
<dbReference type="HOGENOM" id="CLU_000288_59_3_1"/>
<dbReference type="InParanoid" id="P06782"/>
<dbReference type="OMA" id="SKTKWHF"/>
<dbReference type="OrthoDB" id="193931at2759"/>
<dbReference type="BioCyc" id="YEAST:G3O-30003-MONOMER"/>
<dbReference type="BRENDA" id="2.7.11.1">
    <property type="organism ID" value="984"/>
</dbReference>
<dbReference type="Reactome" id="R-SCE-1632852">
    <property type="pathway name" value="Macroautophagy"/>
</dbReference>
<dbReference type="Reactome" id="R-SCE-163680">
    <property type="pathway name" value="AMPK inhibits chREBP transcriptional activation activity"/>
</dbReference>
<dbReference type="Reactome" id="R-SCE-200425">
    <property type="pathway name" value="Carnitine shuttle"/>
</dbReference>
<dbReference type="Reactome" id="R-SCE-380972">
    <property type="pathway name" value="Energy dependent regulation of mTOR by LKB1-AMPK"/>
</dbReference>
<dbReference type="BioGRID-ORCS" id="852088">
    <property type="hits" value="6 hits in 13 CRISPR screens"/>
</dbReference>
<dbReference type="EvolutionaryTrace" id="P06782"/>
<dbReference type="PRO" id="PR:P06782"/>
<dbReference type="Proteomes" id="UP000002311">
    <property type="component" value="Chromosome IV"/>
</dbReference>
<dbReference type="RNAct" id="P06782">
    <property type="molecule type" value="protein"/>
</dbReference>
<dbReference type="GO" id="GO:0000144">
    <property type="term" value="C:cellular bud neck septin ring"/>
    <property type="evidence" value="ECO:0000314"/>
    <property type="project" value="SGD"/>
</dbReference>
<dbReference type="GO" id="GO:0005737">
    <property type="term" value="C:cytoplasm"/>
    <property type="evidence" value="ECO:0000314"/>
    <property type="project" value="SGD"/>
</dbReference>
<dbReference type="GO" id="GO:0005739">
    <property type="term" value="C:mitochondrion"/>
    <property type="evidence" value="ECO:0007005"/>
    <property type="project" value="SGD"/>
</dbReference>
<dbReference type="GO" id="GO:0005641">
    <property type="term" value="C:nuclear envelope lumen"/>
    <property type="evidence" value="ECO:0000314"/>
    <property type="project" value="SGD"/>
</dbReference>
<dbReference type="GO" id="GO:0031965">
    <property type="term" value="C:nuclear membrane"/>
    <property type="evidence" value="ECO:0007669"/>
    <property type="project" value="UniProtKB-SubCell"/>
</dbReference>
<dbReference type="GO" id="GO:0031588">
    <property type="term" value="C:nucleotide-activated protein kinase complex"/>
    <property type="evidence" value="ECO:0000314"/>
    <property type="project" value="SGD"/>
</dbReference>
<dbReference type="GO" id="GO:0005634">
    <property type="term" value="C:nucleus"/>
    <property type="evidence" value="ECO:0000314"/>
    <property type="project" value="SGD"/>
</dbReference>
<dbReference type="GO" id="GO:0005774">
    <property type="term" value="C:vacuolar membrane"/>
    <property type="evidence" value="ECO:0000314"/>
    <property type="project" value="SGD"/>
</dbReference>
<dbReference type="GO" id="GO:0004679">
    <property type="term" value="F:AMP-activated protein kinase activity"/>
    <property type="evidence" value="ECO:0000314"/>
    <property type="project" value="SGD"/>
</dbReference>
<dbReference type="GO" id="GO:0005524">
    <property type="term" value="F:ATP binding"/>
    <property type="evidence" value="ECO:0007669"/>
    <property type="project" value="UniProtKB-KW"/>
</dbReference>
<dbReference type="GO" id="GO:0005085">
    <property type="term" value="F:guanyl-nucleotide exchange factor activity"/>
    <property type="evidence" value="ECO:0000314"/>
    <property type="project" value="SGD"/>
</dbReference>
<dbReference type="GO" id="GO:0042802">
    <property type="term" value="F:identical protein binding"/>
    <property type="evidence" value="ECO:0000353"/>
    <property type="project" value="IntAct"/>
</dbReference>
<dbReference type="GO" id="GO:0140677">
    <property type="term" value="F:molecular function activator activity"/>
    <property type="evidence" value="ECO:0000269"/>
    <property type="project" value="DisProt"/>
</dbReference>
<dbReference type="GO" id="GO:0004672">
    <property type="term" value="F:protein kinase activity"/>
    <property type="evidence" value="ECO:0007005"/>
    <property type="project" value="SGD"/>
</dbReference>
<dbReference type="GO" id="GO:0106310">
    <property type="term" value="F:protein serine kinase activity"/>
    <property type="evidence" value="ECO:0007669"/>
    <property type="project" value="RHEA"/>
</dbReference>
<dbReference type="GO" id="GO:0004674">
    <property type="term" value="F:protein serine/threonine kinase activity"/>
    <property type="evidence" value="ECO:0000314"/>
    <property type="project" value="GO_Central"/>
</dbReference>
<dbReference type="GO" id="GO:0042149">
    <property type="term" value="P:cellular response to glucose starvation"/>
    <property type="evidence" value="ECO:0000314"/>
    <property type="project" value="SGD"/>
</dbReference>
<dbReference type="GO" id="GO:0033554">
    <property type="term" value="P:cellular response to stress"/>
    <property type="evidence" value="ECO:0000315"/>
    <property type="project" value="SGD"/>
</dbReference>
<dbReference type="GO" id="GO:0000132">
    <property type="term" value="P:establishment of mitotic spindle orientation"/>
    <property type="evidence" value="ECO:0000315"/>
    <property type="project" value="SGD"/>
</dbReference>
<dbReference type="GO" id="GO:0030447">
    <property type="term" value="P:filamentous growth"/>
    <property type="evidence" value="ECO:0000315"/>
    <property type="project" value="ComplexPortal"/>
</dbReference>
<dbReference type="GO" id="GO:0071940">
    <property type="term" value="P:fungal-type cell wall assembly"/>
    <property type="evidence" value="ECO:0000315"/>
    <property type="project" value="SGD"/>
</dbReference>
<dbReference type="GO" id="GO:0001403">
    <property type="term" value="P:invasive growth in response to glucose limitation"/>
    <property type="evidence" value="ECO:0000315"/>
    <property type="project" value="SGD"/>
</dbReference>
<dbReference type="GO" id="GO:0010920">
    <property type="term" value="P:negative regulation of inositol phosphate biosynthetic process"/>
    <property type="evidence" value="ECO:0000315"/>
    <property type="project" value="SGD"/>
</dbReference>
<dbReference type="GO" id="GO:0017148">
    <property type="term" value="P:negative regulation of translation"/>
    <property type="evidence" value="ECO:0000315"/>
    <property type="project" value="SGD"/>
</dbReference>
<dbReference type="GO" id="GO:1900436">
    <property type="term" value="P:positive regulation of filamentous growth of a population of unicellular organisms in response to starvation"/>
    <property type="evidence" value="ECO:0000315"/>
    <property type="project" value="SGD"/>
</dbReference>
<dbReference type="GO" id="GO:0045722">
    <property type="term" value="P:positive regulation of gluconeogenesis"/>
    <property type="evidence" value="ECO:0000315"/>
    <property type="project" value="SGD"/>
</dbReference>
<dbReference type="GO" id="GO:0016239">
    <property type="term" value="P:positive regulation of macroautophagy"/>
    <property type="evidence" value="ECO:0000315"/>
    <property type="project" value="SGD"/>
</dbReference>
<dbReference type="GO" id="GO:2000222">
    <property type="term" value="P:positive regulation of pseudohyphal growth"/>
    <property type="evidence" value="ECO:0000315"/>
    <property type="project" value="SGD"/>
</dbReference>
<dbReference type="GO" id="GO:1904547">
    <property type="term" value="P:regulation of cellular response to glucose starvation"/>
    <property type="evidence" value="ECO:0000269"/>
    <property type="project" value="ComplexPortal"/>
</dbReference>
<dbReference type="GO" id="GO:2000217">
    <property type="term" value="P:regulation of invasive growth in response to glucose limitation"/>
    <property type="evidence" value="ECO:0000315"/>
    <property type="project" value="ComplexPortal"/>
</dbReference>
<dbReference type="GO" id="GO:0034976">
    <property type="term" value="P:response to endoplasmic reticulum stress"/>
    <property type="evidence" value="ECO:0000315"/>
    <property type="project" value="SGD"/>
</dbReference>
<dbReference type="GO" id="GO:0006986">
    <property type="term" value="P:response to unfolded protein"/>
    <property type="evidence" value="ECO:0000315"/>
    <property type="project" value="SGD"/>
</dbReference>
<dbReference type="GO" id="GO:0090606">
    <property type="term" value="P:single-species surface biofilm formation"/>
    <property type="evidence" value="ECO:0000315"/>
    <property type="project" value="SGD"/>
</dbReference>
<dbReference type="CDD" id="cd12122">
    <property type="entry name" value="AMPKA_C"/>
    <property type="match status" value="1"/>
</dbReference>
<dbReference type="CDD" id="cd14079">
    <property type="entry name" value="STKc_AMPK_alpha"/>
    <property type="match status" value="1"/>
</dbReference>
<dbReference type="CDD" id="cd14334">
    <property type="entry name" value="UBA_SNF1_fungi"/>
    <property type="match status" value="1"/>
</dbReference>
<dbReference type="DisProt" id="DP02769"/>
<dbReference type="FunFam" id="1.10.510.10:FF:000544">
    <property type="entry name" value="Non-specific serine/threonine protein kinase"/>
    <property type="match status" value="1"/>
</dbReference>
<dbReference type="FunFam" id="1.10.8.10:FF:000069">
    <property type="entry name" value="Non-specific serine/threonine protein kinase"/>
    <property type="match status" value="1"/>
</dbReference>
<dbReference type="FunFam" id="3.30.200.20:FF:000236">
    <property type="entry name" value="Non-specific serine/threonine protein kinase"/>
    <property type="match status" value="1"/>
</dbReference>
<dbReference type="FunFam" id="3.30.310.80:FF:000017">
    <property type="entry name" value="Non-specific serine/threonine protein kinase"/>
    <property type="match status" value="1"/>
</dbReference>
<dbReference type="Gene3D" id="1.10.8.10">
    <property type="entry name" value="DNA helicase RuvA subunit, C-terminal domain"/>
    <property type="match status" value="1"/>
</dbReference>
<dbReference type="Gene3D" id="3.30.310.80">
    <property type="entry name" value="Kinase associated domain 1, KA1"/>
    <property type="match status" value="1"/>
</dbReference>
<dbReference type="Gene3D" id="3.30.200.20">
    <property type="entry name" value="Phosphorylase Kinase, domain 1"/>
    <property type="match status" value="1"/>
</dbReference>
<dbReference type="Gene3D" id="1.10.510.10">
    <property type="entry name" value="Transferase(Phosphotransferase) domain 1"/>
    <property type="match status" value="1"/>
</dbReference>
<dbReference type="InterPro" id="IPR032270">
    <property type="entry name" value="AMPK_C"/>
</dbReference>
<dbReference type="InterPro" id="IPR028375">
    <property type="entry name" value="KA1/Ssp2_C"/>
</dbReference>
<dbReference type="InterPro" id="IPR011009">
    <property type="entry name" value="Kinase-like_dom_sf"/>
</dbReference>
<dbReference type="InterPro" id="IPR000719">
    <property type="entry name" value="Prot_kinase_dom"/>
</dbReference>
<dbReference type="InterPro" id="IPR017441">
    <property type="entry name" value="Protein_kinase_ATP_BS"/>
</dbReference>
<dbReference type="InterPro" id="IPR008271">
    <property type="entry name" value="Ser/Thr_kinase_AS"/>
</dbReference>
<dbReference type="InterPro" id="IPR013896">
    <property type="entry name" value="SNF1_UBA"/>
</dbReference>
<dbReference type="PANTHER" id="PTHR24346">
    <property type="entry name" value="MAP/MICROTUBULE AFFINITY-REGULATING KINASE"/>
    <property type="match status" value="1"/>
</dbReference>
<dbReference type="PANTHER" id="PTHR24346:SF110">
    <property type="entry name" value="NON-SPECIFIC SERINE_THREONINE PROTEIN KINASE"/>
    <property type="match status" value="1"/>
</dbReference>
<dbReference type="Pfam" id="PF16579">
    <property type="entry name" value="AdenylateSensor"/>
    <property type="match status" value="1"/>
</dbReference>
<dbReference type="Pfam" id="PF00069">
    <property type="entry name" value="Pkinase"/>
    <property type="match status" value="1"/>
</dbReference>
<dbReference type="Pfam" id="PF08587">
    <property type="entry name" value="UBA_2"/>
    <property type="match status" value="1"/>
</dbReference>
<dbReference type="SMART" id="SM00220">
    <property type="entry name" value="S_TKc"/>
    <property type="match status" value="1"/>
</dbReference>
<dbReference type="SUPFAM" id="SSF103243">
    <property type="entry name" value="KA1-like"/>
    <property type="match status" value="1"/>
</dbReference>
<dbReference type="SUPFAM" id="SSF56112">
    <property type="entry name" value="Protein kinase-like (PK-like)"/>
    <property type="match status" value="1"/>
</dbReference>
<dbReference type="PROSITE" id="PS00107">
    <property type="entry name" value="PROTEIN_KINASE_ATP"/>
    <property type="match status" value="1"/>
</dbReference>
<dbReference type="PROSITE" id="PS50011">
    <property type="entry name" value="PROTEIN_KINASE_DOM"/>
    <property type="match status" value="1"/>
</dbReference>
<dbReference type="PROSITE" id="PS00108">
    <property type="entry name" value="PROTEIN_KINASE_ST"/>
    <property type="match status" value="1"/>
</dbReference>
<proteinExistence type="evidence at protein level"/>
<protein>
    <recommendedName>
        <fullName evidence="39">Carbon catabolite-derepressing protein kinase</fullName>
        <ecNumber evidence="9 23 30">2.7.11.1</ecNumber>
    </recommendedName>
    <alternativeName>
        <fullName evidence="40">Sucrose nonfermentating protein 1</fullName>
    </alternativeName>
</protein>